<protein>
    <recommendedName>
        <fullName evidence="1">Argininosuccinate lyase</fullName>
        <shortName evidence="1">ASAL</shortName>
        <ecNumber evidence="1">4.3.2.1</ecNumber>
    </recommendedName>
    <alternativeName>
        <fullName evidence="1">Arginosuccinase</fullName>
    </alternativeName>
</protein>
<dbReference type="EC" id="4.3.2.1" evidence="1"/>
<dbReference type="EMBL" id="AJ311775">
    <property type="protein sequence ID" value="CAC43335.1"/>
    <property type="molecule type" value="Genomic_DNA"/>
</dbReference>
<dbReference type="RefSeq" id="YP_007878693.1">
    <property type="nucleotide sequence ID" value="NC_021080.1"/>
</dbReference>
<dbReference type="SMR" id="Q93JQ9"/>
<dbReference type="STRING" id="1443905.GCA_000761075_00051"/>
<dbReference type="eggNOG" id="COG0165">
    <property type="taxonomic scope" value="Bacteria"/>
</dbReference>
<dbReference type="UniPathway" id="UPA00068">
    <property type="reaction ID" value="UER00114"/>
</dbReference>
<dbReference type="GO" id="GO:0005829">
    <property type="term" value="C:cytosol"/>
    <property type="evidence" value="ECO:0007669"/>
    <property type="project" value="TreeGrafter"/>
</dbReference>
<dbReference type="GO" id="GO:0004056">
    <property type="term" value="F:argininosuccinate lyase activity"/>
    <property type="evidence" value="ECO:0007669"/>
    <property type="project" value="UniProtKB-UniRule"/>
</dbReference>
<dbReference type="GO" id="GO:0042450">
    <property type="term" value="P:arginine biosynthetic process via ornithine"/>
    <property type="evidence" value="ECO:0007669"/>
    <property type="project" value="InterPro"/>
</dbReference>
<dbReference type="GO" id="GO:0006526">
    <property type="term" value="P:L-arginine biosynthetic process"/>
    <property type="evidence" value="ECO:0007669"/>
    <property type="project" value="UniProtKB-UniRule"/>
</dbReference>
<dbReference type="CDD" id="cd01359">
    <property type="entry name" value="Argininosuccinate_lyase"/>
    <property type="match status" value="1"/>
</dbReference>
<dbReference type="Gene3D" id="1.10.40.30">
    <property type="entry name" value="Fumarase/aspartase (C-terminal domain)"/>
    <property type="match status" value="1"/>
</dbReference>
<dbReference type="Gene3D" id="1.20.200.10">
    <property type="entry name" value="Fumarase/aspartase (Central domain)"/>
    <property type="match status" value="1"/>
</dbReference>
<dbReference type="Gene3D" id="1.10.275.10">
    <property type="entry name" value="Fumarase/aspartase (N-terminal domain)"/>
    <property type="match status" value="1"/>
</dbReference>
<dbReference type="HAMAP" id="MF_00006">
    <property type="entry name" value="Arg_succ_lyase"/>
    <property type="match status" value="1"/>
</dbReference>
<dbReference type="InterPro" id="IPR029419">
    <property type="entry name" value="Arg_succ_lyase_C"/>
</dbReference>
<dbReference type="InterPro" id="IPR009049">
    <property type="entry name" value="Argininosuccinate_lyase"/>
</dbReference>
<dbReference type="InterPro" id="IPR024083">
    <property type="entry name" value="Fumarase/histidase_N"/>
</dbReference>
<dbReference type="InterPro" id="IPR020557">
    <property type="entry name" value="Fumarate_lyase_CS"/>
</dbReference>
<dbReference type="InterPro" id="IPR000362">
    <property type="entry name" value="Fumarate_lyase_fam"/>
</dbReference>
<dbReference type="InterPro" id="IPR022761">
    <property type="entry name" value="Fumarate_lyase_N"/>
</dbReference>
<dbReference type="InterPro" id="IPR008948">
    <property type="entry name" value="L-Aspartase-like"/>
</dbReference>
<dbReference type="NCBIfam" id="TIGR00838">
    <property type="entry name" value="argH"/>
    <property type="match status" value="1"/>
</dbReference>
<dbReference type="PANTHER" id="PTHR43814">
    <property type="entry name" value="ARGININOSUCCINATE LYASE"/>
    <property type="match status" value="1"/>
</dbReference>
<dbReference type="PANTHER" id="PTHR43814:SF1">
    <property type="entry name" value="ARGININOSUCCINATE LYASE"/>
    <property type="match status" value="1"/>
</dbReference>
<dbReference type="Pfam" id="PF14698">
    <property type="entry name" value="ASL_C2"/>
    <property type="match status" value="1"/>
</dbReference>
<dbReference type="Pfam" id="PF00206">
    <property type="entry name" value="Lyase_1"/>
    <property type="match status" value="1"/>
</dbReference>
<dbReference type="PRINTS" id="PR00145">
    <property type="entry name" value="ARGSUCLYASE"/>
</dbReference>
<dbReference type="PRINTS" id="PR00149">
    <property type="entry name" value="FUMRATELYASE"/>
</dbReference>
<dbReference type="SUPFAM" id="SSF48557">
    <property type="entry name" value="L-aspartase-like"/>
    <property type="match status" value="1"/>
</dbReference>
<dbReference type="PROSITE" id="PS00163">
    <property type="entry name" value="FUMARATE_LYASES"/>
    <property type="match status" value="1"/>
</dbReference>
<proteinExistence type="inferred from homology"/>
<gene>
    <name evidence="1" type="primary">argH</name>
    <name type="synonym">attA</name>
</gene>
<organism>
    <name type="scientific">Rhodococcoides fascians</name>
    <name type="common">Rhodococcus fascians</name>
    <dbReference type="NCBI Taxonomy" id="1828"/>
    <lineage>
        <taxon>Bacteria</taxon>
        <taxon>Bacillati</taxon>
        <taxon>Actinomycetota</taxon>
        <taxon>Actinomycetes</taxon>
        <taxon>Mycobacteriales</taxon>
        <taxon>Nocardiaceae</taxon>
        <taxon>Rhodococcoides</taxon>
    </lineage>
</organism>
<name>ARLY_RHOFA</name>
<evidence type="ECO:0000255" key="1">
    <source>
        <dbReference type="HAMAP-Rule" id="MF_00006"/>
    </source>
</evidence>
<reference key="1">
    <citation type="journal article" date="2001" name="Mol. Microbiol.">
        <title>The att locus of Rhodococcus fascians strain D188 is essential for full virulence on tobacco through the production of an autoregulatory compound.</title>
        <authorList>
            <person name="Maes T."/>
            <person name="Vereecke D."/>
            <person name="Ritsema T."/>
            <person name="Cornelis K."/>
            <person name="Thu H.N."/>
            <person name="Van Montagu M."/>
            <person name="Holsters M."/>
            <person name="Goethals K."/>
        </authorList>
    </citation>
    <scope>NUCLEOTIDE SEQUENCE [GENOMIC DNA]</scope>
    <source>
        <strain>D188</strain>
    </source>
</reference>
<feature type="chain" id="PRO_0000137815" description="Argininosuccinate lyase">
    <location>
        <begin position="1"/>
        <end position="505"/>
    </location>
</feature>
<accession>Q93JQ9</accession>
<sequence>MSEKLWGGRFSTDITDDVLRYTETASVDSRMLEHDLWQNIAHVLMLGRAGINTEPDTKALLAGLLDMESSRADGGLQLDVRQEDVHLNTEFMLIERIGPVGGRMHTARSRNDQVQTDARMVTREWLLDASEELLMFVQDLLGCPESEREAVLPGYTHSQAAQPISVAFWKAAHAQALLRDASRLMDAWKRININPLGACALAGTTFALDRDYTSRLLGFDAPMVNALDATSTRDWTVEVAGAAASGAVNLSRMQEEIVTWSSNEYALAEVHDSFATGSSIMPQKKNPVVAELARGKSGRAVGALVQLLVMEKSVGLGYSCDLQEDKPVYWGALDTYLDTIRLCRRQNLHTAFDGARGRALCWDNFSTATEIANILVSRFDVPFRTAHRITGDLVNAALGGGHTLRNVAFTTTFLREEHDIDISEVDMKQICDPLHTLRSYISAGSTGPTRVSEQQEQGLADVTDRLAEIRQARTRLWEAKAECLRAARSVVGGVSVPELAMEVGV</sequence>
<keyword id="KW-0028">Amino-acid biosynthesis</keyword>
<keyword id="KW-0055">Arginine biosynthesis</keyword>
<keyword id="KW-0963">Cytoplasm</keyword>
<keyword id="KW-0456">Lyase</keyword>
<comment type="catalytic activity">
    <reaction evidence="1">
        <text>2-(N(omega)-L-arginino)succinate = fumarate + L-arginine</text>
        <dbReference type="Rhea" id="RHEA:24020"/>
        <dbReference type="ChEBI" id="CHEBI:29806"/>
        <dbReference type="ChEBI" id="CHEBI:32682"/>
        <dbReference type="ChEBI" id="CHEBI:57472"/>
        <dbReference type="EC" id="4.3.2.1"/>
    </reaction>
</comment>
<comment type="pathway">
    <text evidence="1">Amino-acid biosynthesis; L-arginine biosynthesis; L-arginine from L-ornithine and carbamoyl phosphate: step 3/3.</text>
</comment>
<comment type="subcellular location">
    <subcellularLocation>
        <location evidence="1">Cytoplasm</location>
    </subcellularLocation>
</comment>
<comment type="similarity">
    <text evidence="1">Belongs to the lyase 1 family. Argininosuccinate lyase subfamily.</text>
</comment>